<protein>
    <recommendedName>
        <fullName evidence="5">(-)-alpha pinene synthase 1, chloroplastic</fullName>
        <ecNumber evidence="4">4.2.3.119</ecNumber>
    </recommendedName>
    <alternativeName>
        <fullName evidence="5">(-)-beta pinene synthase 1, chloroplastic</fullName>
        <ecNumber evidence="4">4.2.3.120</ecNumber>
    </alternativeName>
    <alternativeName>
        <fullName evidence="5">Terpene synthase (-)alphapin1</fullName>
        <shortName evidence="5">PcTPS-(-)alphapin1</shortName>
    </alternativeName>
</protein>
<comment type="function">
    <text evidence="4">Monoterpene synthase (TPS) involved in the biosynthesis of monoterpene natural products included in conifer oleoresin secretions and volatile emissions; these compounds contribute to biotic and abiotic stress defense against herbivores and pathogens (PubMed:23679205). Catalyzes the conversion of (2E)-geranyl diphosphate (GPP) to (-)-alpha-pinene and, to a lower extent, to (-)-beta-pinene (PubMed:23679205).</text>
</comment>
<comment type="catalytic activity">
    <reaction evidence="4">
        <text>(2E)-geranyl diphosphate = (1S,5S)-alpha-pinene + diphosphate</text>
        <dbReference type="Rhea" id="RHEA:25488"/>
        <dbReference type="ChEBI" id="CHEBI:28660"/>
        <dbReference type="ChEBI" id="CHEBI:33019"/>
        <dbReference type="ChEBI" id="CHEBI:58057"/>
        <dbReference type="EC" id="4.2.3.119"/>
    </reaction>
    <physiologicalReaction direction="left-to-right" evidence="4">
        <dbReference type="Rhea" id="RHEA:25489"/>
    </physiologicalReaction>
</comment>
<comment type="catalytic activity">
    <reaction evidence="4">
        <text>(2E)-geranyl diphosphate = (1S,5S)-beta-pinene + diphosphate</text>
        <dbReference type="Rhea" id="RHEA:25496"/>
        <dbReference type="ChEBI" id="CHEBI:28359"/>
        <dbReference type="ChEBI" id="CHEBI:33019"/>
        <dbReference type="ChEBI" id="CHEBI:58057"/>
        <dbReference type="EC" id="4.2.3.120"/>
    </reaction>
    <physiologicalReaction direction="left-to-right" evidence="4">
        <dbReference type="Rhea" id="RHEA:25497"/>
    </physiologicalReaction>
</comment>
<comment type="cofactor">
    <cofactor evidence="1">
        <name>Mg(2+)</name>
        <dbReference type="ChEBI" id="CHEBI:18420"/>
    </cofactor>
    <cofactor evidence="1">
        <name>Mn(2+)</name>
        <dbReference type="ChEBI" id="CHEBI:29035"/>
    </cofactor>
    <text evidence="1">Binds 3 Mg(2+) or Mn(2+) ions per subunit.</text>
</comment>
<comment type="pathway">
    <text evidence="4">Terpene metabolism; oleoresin biosynthesis.</text>
</comment>
<comment type="pathway">
    <text evidence="4">Secondary metabolite biosynthesis; terpenoid biosynthesis.</text>
</comment>
<comment type="subcellular location">
    <subcellularLocation>
        <location evidence="3">Plastid</location>
        <location evidence="3">Chloroplast</location>
    </subcellularLocation>
</comment>
<comment type="domain">
    <text evidence="6">The Asp-Asp-Xaa-Xaa-Asp/Glu (DDXXD/E) motif is important for the catalytic activity, presumably through binding to Mg(2+).</text>
</comment>
<comment type="similarity">
    <text evidence="6">Belongs to the terpene synthase family. Tpsd subfamily.</text>
</comment>
<sequence length="629" mass="71762">MSPVSVISLPSDLCLPTSFIDRSGRELNPLHITIPNVAMRRQGKLMTRASMSVNLRTAVSDDAVIRRRGDFHSNLWDDDFIQSLSSHYGEPSYRERAERLIGEVKNSFNSVSNEDGESITPLDDLIQRLWMVDSVERLGIDRHFKKEIKSALDHVYSYWSEKGIGCGRESVVTDLNSTALGLRTLRLHGYDVSAEVLNHFKNQSGQFACTLKQTEDQIRTVLNLYRASLIAFPGEKVMDEAETFSAKYLKDALQKIPVSSLSREIGDVLEYGWHTYLPRLEARNYIDVFGQDTENSKSYMKTEKLLELAKLEFNIFHALQKRELEYLVRWWKGSGSPQMTFCRHRHVEYYTLASCIAFEPQHSGFRLGFAKACHIITVLDDMYDTFGTLDELELFTSAIKRWDPSATECLPEYMKGVYMIVYNTVNEMSQEADKAQGRDTLNYCRQAWEEYIDAYMQEAKWIASGEVPTFEEYYENGKVSSGHRVSALQPILTTDIPFPEHVLKEVDIPSKLNDLASAILRLRGDTRCYQADRARGEEASCISCYMKDNPGTTEEDALNHINAMISDVIKGLNWELLKPNSSVPISAKKHAFDISRAFHYGYKYRDGYSVASIETKSLVKRTVIDPVTL</sequence>
<keyword id="KW-0150">Chloroplast</keyword>
<keyword id="KW-0456">Lyase</keyword>
<keyword id="KW-0460">Magnesium</keyword>
<keyword id="KW-0479">Metal-binding</keyword>
<keyword id="KW-0934">Plastid</keyword>
<keyword id="KW-0809">Transit peptide</keyword>
<name>SAPN1_PINCO</name>
<reference key="1">
    <citation type="journal article" date="2013" name="BMC Plant Biol.">
        <title>Transcriptome resources and functional characterization of monoterpene synthases for two host species of the mountain pine beetle, lodgepole pine (Pinus contorta) and jack pine (Pinus banksiana).</title>
        <authorList>
            <person name="Hall D.E."/>
            <person name="Yuen M.M.S."/>
            <person name="Jancsik S."/>
            <person name="Quesada A.L."/>
            <person name="Dullat H.K."/>
            <person name="Li M."/>
            <person name="Henderson H."/>
            <person name="Arango-Velez A."/>
            <person name="Liao N.Y."/>
            <person name="Docking R.T."/>
            <person name="Chan S.K."/>
            <person name="Cooke J.E.K."/>
            <person name="Breuil C."/>
            <person name="Jones S.J.M."/>
            <person name="Keeling C.I."/>
            <person name="Bohlmann J."/>
        </authorList>
    </citation>
    <scope>NUCLEOTIDE SEQUENCE [MRNA]</scope>
    <scope>FUNCTION</scope>
    <scope>CATALYTIC ACTIVITY</scope>
    <scope>PATHWAY</scope>
</reference>
<gene>
    <name evidence="5" type="primary">TPS-(-)Apin1</name>
</gene>
<accession>R9QMR3</accession>
<feature type="transit peptide" description="Chloroplast" evidence="3">
    <location>
        <begin position="1"/>
        <end position="48"/>
    </location>
</feature>
<feature type="chain" id="PRO_0000455024" description="(-)-alpha pinene synthase 1, chloroplastic">
    <location>
        <begin position="49"/>
        <end position="629"/>
    </location>
</feature>
<feature type="short sequence motif" description="DDXXD motif" evidence="6">
    <location>
        <begin position="380"/>
        <end position="384"/>
    </location>
</feature>
<feature type="binding site" evidence="2">
    <location>
        <position position="380"/>
    </location>
    <ligand>
        <name>Mg(2+)</name>
        <dbReference type="ChEBI" id="CHEBI:18420"/>
        <label>1</label>
    </ligand>
</feature>
<feature type="binding site" evidence="2">
    <location>
        <position position="380"/>
    </location>
    <ligand>
        <name>Mg(2+)</name>
        <dbReference type="ChEBI" id="CHEBI:18420"/>
        <label>2</label>
    </ligand>
</feature>
<feature type="binding site" evidence="2">
    <location>
        <position position="384"/>
    </location>
    <ligand>
        <name>Mg(2+)</name>
        <dbReference type="ChEBI" id="CHEBI:18420"/>
        <label>1</label>
    </ligand>
</feature>
<feature type="binding site" evidence="2">
    <location>
        <position position="384"/>
    </location>
    <ligand>
        <name>Mg(2+)</name>
        <dbReference type="ChEBI" id="CHEBI:18420"/>
        <label>2</label>
    </ligand>
</feature>
<feature type="binding site" evidence="2">
    <location>
        <position position="532"/>
    </location>
    <ligand>
        <name>Mg(2+)</name>
        <dbReference type="ChEBI" id="CHEBI:18420"/>
        <label>3</label>
    </ligand>
</feature>
<organism>
    <name type="scientific">Pinus contorta</name>
    <name type="common">Shore pine</name>
    <name type="synonym">Lodgepole pine</name>
    <dbReference type="NCBI Taxonomy" id="3339"/>
    <lineage>
        <taxon>Eukaryota</taxon>
        <taxon>Viridiplantae</taxon>
        <taxon>Streptophyta</taxon>
        <taxon>Embryophyta</taxon>
        <taxon>Tracheophyta</taxon>
        <taxon>Spermatophyta</taxon>
        <taxon>Pinopsida</taxon>
        <taxon>Pinidae</taxon>
        <taxon>Conifers I</taxon>
        <taxon>Pinales</taxon>
        <taxon>Pinaceae</taxon>
        <taxon>Pinus</taxon>
        <taxon>Pinus subgen. Pinus</taxon>
    </lineage>
</organism>
<evidence type="ECO:0000250" key="1">
    <source>
        <dbReference type="UniProtKB" id="A0A1C9J6A7"/>
    </source>
</evidence>
<evidence type="ECO:0000250" key="2">
    <source>
        <dbReference type="UniProtKB" id="Q40577"/>
    </source>
</evidence>
<evidence type="ECO:0000255" key="3"/>
<evidence type="ECO:0000269" key="4">
    <source>
    </source>
</evidence>
<evidence type="ECO:0000303" key="5">
    <source>
    </source>
</evidence>
<evidence type="ECO:0000305" key="6"/>
<proteinExistence type="evidence at protein level"/>
<dbReference type="EC" id="4.2.3.119" evidence="4"/>
<dbReference type="EC" id="4.2.3.120" evidence="4"/>
<dbReference type="EMBL" id="JQ240303">
    <property type="protein sequence ID" value="AFU73855.1"/>
    <property type="molecule type" value="mRNA"/>
</dbReference>
<dbReference type="SMR" id="R9QMR3"/>
<dbReference type="BRENDA" id="4.2.3.119">
    <property type="organism ID" value="4843"/>
</dbReference>
<dbReference type="BRENDA" id="4.2.3.120">
    <property type="organism ID" value="4843"/>
</dbReference>
<dbReference type="UniPathway" id="UPA00213"/>
<dbReference type="UniPathway" id="UPA00924"/>
<dbReference type="GO" id="GO:0009507">
    <property type="term" value="C:chloroplast"/>
    <property type="evidence" value="ECO:0007669"/>
    <property type="project" value="UniProtKB-SubCell"/>
</dbReference>
<dbReference type="GO" id="GO:0000287">
    <property type="term" value="F:magnesium ion binding"/>
    <property type="evidence" value="ECO:0007669"/>
    <property type="project" value="InterPro"/>
</dbReference>
<dbReference type="GO" id="GO:0050550">
    <property type="term" value="F:pinene synthase activity"/>
    <property type="evidence" value="ECO:0000314"/>
    <property type="project" value="UniProtKB"/>
</dbReference>
<dbReference type="GO" id="GO:0010333">
    <property type="term" value="F:terpene synthase activity"/>
    <property type="evidence" value="ECO:0000314"/>
    <property type="project" value="UniProtKB"/>
</dbReference>
<dbReference type="GO" id="GO:0018867">
    <property type="term" value="P:alpha-pinene metabolic process"/>
    <property type="evidence" value="ECO:0000314"/>
    <property type="project" value="UniProtKB"/>
</dbReference>
<dbReference type="GO" id="GO:0016102">
    <property type="term" value="P:diterpenoid biosynthetic process"/>
    <property type="evidence" value="ECO:0007669"/>
    <property type="project" value="InterPro"/>
</dbReference>
<dbReference type="GO" id="GO:0010597">
    <property type="term" value="P:green leaf volatile biosynthetic process"/>
    <property type="evidence" value="ECO:0000314"/>
    <property type="project" value="UniProtKB"/>
</dbReference>
<dbReference type="GO" id="GO:0016114">
    <property type="term" value="P:terpenoid biosynthetic process"/>
    <property type="evidence" value="ECO:0000314"/>
    <property type="project" value="UniProtKB"/>
</dbReference>
<dbReference type="CDD" id="cd00684">
    <property type="entry name" value="Terpene_cyclase_plant_C1"/>
    <property type="match status" value="1"/>
</dbReference>
<dbReference type="FunFam" id="1.50.10.130:FF:000004">
    <property type="entry name" value="Carene synthase, chloroplastic"/>
    <property type="match status" value="1"/>
</dbReference>
<dbReference type="FunFam" id="1.10.600.10:FF:000005">
    <property type="entry name" value="Ent-kaur-16-ene synthase, chloroplastic"/>
    <property type="match status" value="1"/>
</dbReference>
<dbReference type="Gene3D" id="1.10.600.10">
    <property type="entry name" value="Farnesyl Diphosphate Synthase"/>
    <property type="match status" value="1"/>
</dbReference>
<dbReference type="Gene3D" id="1.50.10.130">
    <property type="entry name" value="Terpene synthase, N-terminal domain"/>
    <property type="match status" value="1"/>
</dbReference>
<dbReference type="InterPro" id="IPR008949">
    <property type="entry name" value="Isoprenoid_synthase_dom_sf"/>
</dbReference>
<dbReference type="InterPro" id="IPR034741">
    <property type="entry name" value="Terpene_cyclase-like_1_C"/>
</dbReference>
<dbReference type="InterPro" id="IPR044814">
    <property type="entry name" value="Terpene_cyclase_plant_C1"/>
</dbReference>
<dbReference type="InterPro" id="IPR001906">
    <property type="entry name" value="Terpene_synth_N"/>
</dbReference>
<dbReference type="InterPro" id="IPR036965">
    <property type="entry name" value="Terpene_synth_N_sf"/>
</dbReference>
<dbReference type="InterPro" id="IPR050148">
    <property type="entry name" value="Terpene_synthase-like"/>
</dbReference>
<dbReference type="InterPro" id="IPR005630">
    <property type="entry name" value="Terpene_synthase_metal-bd"/>
</dbReference>
<dbReference type="InterPro" id="IPR008930">
    <property type="entry name" value="Terpenoid_cyclase/PrenylTrfase"/>
</dbReference>
<dbReference type="PANTHER" id="PTHR31225">
    <property type="entry name" value="OS04G0344100 PROTEIN-RELATED"/>
    <property type="match status" value="1"/>
</dbReference>
<dbReference type="Pfam" id="PF01397">
    <property type="entry name" value="Terpene_synth"/>
    <property type="match status" value="1"/>
</dbReference>
<dbReference type="Pfam" id="PF03936">
    <property type="entry name" value="Terpene_synth_C"/>
    <property type="match status" value="1"/>
</dbReference>
<dbReference type="SFLD" id="SFLDS00005">
    <property type="entry name" value="Isoprenoid_Synthase_Type_I"/>
    <property type="match status" value="1"/>
</dbReference>
<dbReference type="SFLD" id="SFLDG01019">
    <property type="entry name" value="Terpene_Cyclase_Like_1_C_Termi"/>
    <property type="match status" value="1"/>
</dbReference>
<dbReference type="SFLD" id="SFLDG01014">
    <property type="entry name" value="Terpene_Cyclase_Like_1_N-term"/>
    <property type="match status" value="1"/>
</dbReference>
<dbReference type="SUPFAM" id="SSF48239">
    <property type="entry name" value="Terpenoid cyclases/Protein prenyltransferases"/>
    <property type="match status" value="1"/>
</dbReference>
<dbReference type="SUPFAM" id="SSF48576">
    <property type="entry name" value="Terpenoid synthases"/>
    <property type="match status" value="1"/>
</dbReference>